<accession>A9WWI1</accession>
<protein>
    <recommendedName>
        <fullName evidence="1">Crossover junction endodeoxyribonuclease RuvC</fullName>
        <ecNumber evidence="1">3.1.21.10</ecNumber>
    </recommendedName>
    <alternativeName>
        <fullName evidence="1">Holliday junction nuclease RuvC</fullName>
    </alternativeName>
    <alternativeName>
        <fullName evidence="1">Holliday junction resolvase RuvC</fullName>
    </alternativeName>
</protein>
<evidence type="ECO:0000255" key="1">
    <source>
        <dbReference type="HAMAP-Rule" id="MF_00034"/>
    </source>
</evidence>
<proteinExistence type="inferred from homology"/>
<dbReference type="EC" id="3.1.21.10" evidence="1"/>
<dbReference type="EMBL" id="CP000912">
    <property type="protein sequence ID" value="ABY40117.1"/>
    <property type="molecule type" value="Genomic_DNA"/>
</dbReference>
<dbReference type="RefSeq" id="WP_006074481.1">
    <property type="nucleotide sequence ID" value="NC_010167.1"/>
</dbReference>
<dbReference type="SMR" id="A9WWI1"/>
<dbReference type="KEGG" id="bmt:BSUIS_B1180"/>
<dbReference type="HOGENOM" id="CLU_091257_1_0_5"/>
<dbReference type="Proteomes" id="UP000008545">
    <property type="component" value="Chromosome II"/>
</dbReference>
<dbReference type="GO" id="GO:0005737">
    <property type="term" value="C:cytoplasm"/>
    <property type="evidence" value="ECO:0007669"/>
    <property type="project" value="UniProtKB-SubCell"/>
</dbReference>
<dbReference type="GO" id="GO:0048476">
    <property type="term" value="C:Holliday junction resolvase complex"/>
    <property type="evidence" value="ECO:0007669"/>
    <property type="project" value="UniProtKB-UniRule"/>
</dbReference>
<dbReference type="GO" id="GO:0008821">
    <property type="term" value="F:crossover junction DNA endonuclease activity"/>
    <property type="evidence" value="ECO:0007669"/>
    <property type="project" value="UniProtKB-UniRule"/>
</dbReference>
<dbReference type="GO" id="GO:0003677">
    <property type="term" value="F:DNA binding"/>
    <property type="evidence" value="ECO:0007669"/>
    <property type="project" value="UniProtKB-KW"/>
</dbReference>
<dbReference type="GO" id="GO:0000287">
    <property type="term" value="F:magnesium ion binding"/>
    <property type="evidence" value="ECO:0007669"/>
    <property type="project" value="UniProtKB-UniRule"/>
</dbReference>
<dbReference type="GO" id="GO:0006310">
    <property type="term" value="P:DNA recombination"/>
    <property type="evidence" value="ECO:0007669"/>
    <property type="project" value="UniProtKB-UniRule"/>
</dbReference>
<dbReference type="GO" id="GO:0006281">
    <property type="term" value="P:DNA repair"/>
    <property type="evidence" value="ECO:0007669"/>
    <property type="project" value="UniProtKB-UniRule"/>
</dbReference>
<dbReference type="CDD" id="cd16962">
    <property type="entry name" value="RuvC"/>
    <property type="match status" value="1"/>
</dbReference>
<dbReference type="FunFam" id="3.30.420.10:FF:000002">
    <property type="entry name" value="Crossover junction endodeoxyribonuclease RuvC"/>
    <property type="match status" value="1"/>
</dbReference>
<dbReference type="Gene3D" id="3.30.420.10">
    <property type="entry name" value="Ribonuclease H-like superfamily/Ribonuclease H"/>
    <property type="match status" value="1"/>
</dbReference>
<dbReference type="HAMAP" id="MF_00034">
    <property type="entry name" value="RuvC"/>
    <property type="match status" value="1"/>
</dbReference>
<dbReference type="InterPro" id="IPR012337">
    <property type="entry name" value="RNaseH-like_sf"/>
</dbReference>
<dbReference type="InterPro" id="IPR036397">
    <property type="entry name" value="RNaseH_sf"/>
</dbReference>
<dbReference type="InterPro" id="IPR020563">
    <property type="entry name" value="X-over_junc_endoDNase_Mg_BS"/>
</dbReference>
<dbReference type="InterPro" id="IPR002176">
    <property type="entry name" value="X-over_junc_endoDNase_RuvC"/>
</dbReference>
<dbReference type="NCBIfam" id="TIGR00228">
    <property type="entry name" value="ruvC"/>
    <property type="match status" value="1"/>
</dbReference>
<dbReference type="PANTHER" id="PTHR30194">
    <property type="entry name" value="CROSSOVER JUNCTION ENDODEOXYRIBONUCLEASE RUVC"/>
    <property type="match status" value="1"/>
</dbReference>
<dbReference type="PANTHER" id="PTHR30194:SF3">
    <property type="entry name" value="CROSSOVER JUNCTION ENDODEOXYRIBONUCLEASE RUVC"/>
    <property type="match status" value="1"/>
</dbReference>
<dbReference type="Pfam" id="PF02075">
    <property type="entry name" value="RuvC"/>
    <property type="match status" value="1"/>
</dbReference>
<dbReference type="PRINTS" id="PR00696">
    <property type="entry name" value="RSOLVASERUVC"/>
</dbReference>
<dbReference type="SUPFAM" id="SSF53098">
    <property type="entry name" value="Ribonuclease H-like"/>
    <property type="match status" value="1"/>
</dbReference>
<dbReference type="PROSITE" id="PS01321">
    <property type="entry name" value="RUVC"/>
    <property type="match status" value="1"/>
</dbReference>
<reference key="1">
    <citation type="submission" date="2007-12" db="EMBL/GenBank/DDBJ databases">
        <title>Brucella suis ATCC 23445 whole genome shotgun sequencing project.</title>
        <authorList>
            <person name="Setubal J.C."/>
            <person name="Bowns C."/>
            <person name="Boyle S."/>
            <person name="Crasta O.R."/>
            <person name="Czar M.J."/>
            <person name="Dharmanolla C."/>
            <person name="Gillespie J.J."/>
            <person name="Kenyon R.W."/>
            <person name="Lu J."/>
            <person name="Mane S."/>
            <person name="Mohapatra S."/>
            <person name="Nagrani S."/>
            <person name="Purkayastha A."/>
            <person name="Rajasimha H.K."/>
            <person name="Shallom J.M."/>
            <person name="Shallom S."/>
            <person name="Shukla M."/>
            <person name="Snyder E.E."/>
            <person name="Sobral B.W."/>
            <person name="Wattam A.R."/>
            <person name="Will R."/>
            <person name="Williams K."/>
            <person name="Yoo H."/>
            <person name="Bruce D."/>
            <person name="Detter C."/>
            <person name="Munk C."/>
            <person name="Brettin T.S."/>
        </authorList>
    </citation>
    <scope>NUCLEOTIDE SEQUENCE [LARGE SCALE GENOMIC DNA]</scope>
    <source>
        <strain>ATCC 23445 / NCTC 10510</strain>
    </source>
</reference>
<organism>
    <name type="scientific">Brucella suis (strain ATCC 23445 / NCTC 10510)</name>
    <dbReference type="NCBI Taxonomy" id="470137"/>
    <lineage>
        <taxon>Bacteria</taxon>
        <taxon>Pseudomonadati</taxon>
        <taxon>Pseudomonadota</taxon>
        <taxon>Alphaproteobacteria</taxon>
        <taxon>Hyphomicrobiales</taxon>
        <taxon>Brucellaceae</taxon>
        <taxon>Brucella/Ochrobactrum group</taxon>
        <taxon>Brucella</taxon>
    </lineage>
</organism>
<name>RUVC_BRUSI</name>
<feature type="chain" id="PRO_1000074479" description="Crossover junction endodeoxyribonuclease RuvC">
    <location>
        <begin position="1"/>
        <end position="173"/>
    </location>
</feature>
<feature type="active site" evidence="1">
    <location>
        <position position="11"/>
    </location>
</feature>
<feature type="active site" evidence="1">
    <location>
        <position position="71"/>
    </location>
</feature>
<feature type="active site" evidence="1">
    <location>
        <position position="143"/>
    </location>
</feature>
<feature type="binding site" evidence="1">
    <location>
        <position position="11"/>
    </location>
    <ligand>
        <name>Mg(2+)</name>
        <dbReference type="ChEBI" id="CHEBI:18420"/>
        <label>1</label>
    </ligand>
</feature>
<feature type="binding site" evidence="1">
    <location>
        <position position="71"/>
    </location>
    <ligand>
        <name>Mg(2+)</name>
        <dbReference type="ChEBI" id="CHEBI:18420"/>
        <label>2</label>
    </ligand>
</feature>
<feature type="binding site" evidence="1">
    <location>
        <position position="143"/>
    </location>
    <ligand>
        <name>Mg(2+)</name>
        <dbReference type="ChEBI" id="CHEBI:18420"/>
        <label>1</label>
    </ligand>
</feature>
<keyword id="KW-0963">Cytoplasm</keyword>
<keyword id="KW-0227">DNA damage</keyword>
<keyword id="KW-0233">DNA recombination</keyword>
<keyword id="KW-0234">DNA repair</keyword>
<keyword id="KW-0238">DNA-binding</keyword>
<keyword id="KW-0255">Endonuclease</keyword>
<keyword id="KW-0378">Hydrolase</keyword>
<keyword id="KW-0460">Magnesium</keyword>
<keyword id="KW-0479">Metal-binding</keyword>
<keyword id="KW-0540">Nuclease</keyword>
<sequence>MKETIRIIGIDPGLRRTGWGIVESLGNSLHFIGSGTVTSNAEMDLASRLCQLHEGLSKVLHEFMPHEAAVEHTFVNKDATATLKLGQARGIALLAPAQAGLPVTEYAPNAVKKAVIGVGHGEKQQIHMMVKVLMPRASFDTSDAADALAIAICHAHHRQSIVSARRMQALLAG</sequence>
<gene>
    <name evidence="1" type="primary">ruvC</name>
    <name type="ordered locus">BSUIS_B1180</name>
</gene>
<comment type="function">
    <text evidence="1">The RuvA-RuvB-RuvC complex processes Holliday junction (HJ) DNA during genetic recombination and DNA repair. Endonuclease that resolves HJ intermediates. Cleaves cruciform DNA by making single-stranded nicks across the HJ at symmetrical positions within the homologous arms, yielding a 5'-phosphate and a 3'-hydroxyl group; requires a central core of homology in the junction. The consensus cleavage sequence is 5'-(A/T)TT(C/G)-3'. Cleavage occurs on the 3'-side of the TT dinucleotide at the point of strand exchange. HJ branch migration catalyzed by RuvA-RuvB allows RuvC to scan DNA until it finds its consensus sequence, where it cleaves and resolves the cruciform DNA.</text>
</comment>
<comment type="catalytic activity">
    <reaction evidence="1">
        <text>Endonucleolytic cleavage at a junction such as a reciprocal single-stranded crossover between two homologous DNA duplexes (Holliday junction).</text>
        <dbReference type="EC" id="3.1.21.10"/>
    </reaction>
</comment>
<comment type="cofactor">
    <cofactor evidence="1">
        <name>Mg(2+)</name>
        <dbReference type="ChEBI" id="CHEBI:18420"/>
    </cofactor>
    <text evidence="1">Binds 2 Mg(2+) ion per subunit.</text>
</comment>
<comment type="subunit">
    <text evidence="1">Homodimer which binds Holliday junction (HJ) DNA. The HJ becomes 2-fold symmetrical on binding to RuvC with unstacked arms; it has a different conformation from HJ DNA in complex with RuvA. In the full resolvosome a probable DNA-RuvA(4)-RuvB(12)-RuvC(2) complex forms which resolves the HJ.</text>
</comment>
<comment type="subcellular location">
    <subcellularLocation>
        <location evidence="1">Cytoplasm</location>
    </subcellularLocation>
</comment>
<comment type="similarity">
    <text evidence="1">Belongs to the RuvC family.</text>
</comment>